<accession>P13512</accession>
<accession>Q58AM2</accession>
<proteinExistence type="evidence at protein level"/>
<name>CZCD_CUPMC</name>
<protein>
    <recommendedName>
        <fullName>Metal cation efflux system protein CzcD</fullName>
    </recommendedName>
    <alternativeName>
        <fullName>Cobalt-zinc-cadmium resistance protein CzcD</fullName>
    </alternativeName>
</protein>
<keyword id="KW-0002">3D-structure</keyword>
<keyword id="KW-0104">Cadmium</keyword>
<keyword id="KW-0105">Cadmium resistance</keyword>
<keyword id="KW-0997">Cell inner membrane</keyword>
<keyword id="KW-1003">Cell membrane</keyword>
<keyword id="KW-0170">Cobalt</keyword>
<keyword id="KW-0406">Ion transport</keyword>
<keyword id="KW-0472">Membrane</keyword>
<keyword id="KW-0614">Plasmid</keyword>
<keyword id="KW-1185">Reference proteome</keyword>
<keyword id="KW-0812">Transmembrane</keyword>
<keyword id="KW-1133">Transmembrane helix</keyword>
<keyword id="KW-0813">Transport</keyword>
<keyword id="KW-0862">Zinc</keyword>
<keyword id="KW-0864">Zinc transport</keyword>
<evidence type="ECO:0000255" key="1"/>
<evidence type="ECO:0000269" key="2">
    <source>
    </source>
</evidence>
<evidence type="ECO:0000269" key="3">
    <source>
    </source>
</evidence>
<evidence type="ECO:0000269" key="4">
    <source>
    </source>
</evidence>
<evidence type="ECO:0000305" key="5"/>
<evidence type="ECO:0007829" key="6">
    <source>
        <dbReference type="PDB" id="6VD9"/>
    </source>
</evidence>
<feature type="chain" id="PRO_0000206105" description="Metal cation efflux system protein CzcD">
    <location>
        <begin position="1"/>
        <end position="316"/>
    </location>
</feature>
<feature type="topological domain" description="Cytoplasmic" evidence="1">
    <location>
        <begin position="1"/>
        <end position="16"/>
    </location>
</feature>
<feature type="transmembrane region" description="Helical" evidence="1">
    <location>
        <begin position="17"/>
        <end position="37"/>
    </location>
</feature>
<feature type="topological domain" description="Periplasmic" evidence="1">
    <location>
        <begin position="38"/>
        <end position="46"/>
    </location>
</feature>
<feature type="transmembrane region" description="Helical" evidence="1">
    <location>
        <begin position="47"/>
        <end position="67"/>
    </location>
</feature>
<feature type="topological domain" description="Cytoplasmic" evidence="1">
    <location>
        <begin position="68"/>
        <end position="81"/>
    </location>
</feature>
<feature type="transmembrane region" description="Helical" evidence="1">
    <location>
        <begin position="82"/>
        <end position="102"/>
    </location>
</feature>
<feature type="topological domain" description="Periplasmic" evidence="1">
    <location>
        <begin position="103"/>
        <end position="114"/>
    </location>
</feature>
<feature type="transmembrane region" description="Helical" evidence="1">
    <location>
        <begin position="115"/>
        <end position="135"/>
    </location>
</feature>
<feature type="topological domain" description="Cytoplasmic" evidence="1">
    <location>
        <begin position="136"/>
        <end position="151"/>
    </location>
</feature>
<feature type="transmembrane region" description="Helical" evidence="1">
    <location>
        <begin position="152"/>
        <end position="172"/>
    </location>
</feature>
<feature type="transmembrane region" description="Helical" evidence="1">
    <location>
        <begin position="174"/>
        <end position="194"/>
    </location>
</feature>
<feature type="topological domain" description="Cytoplasmic" evidence="1">
    <location>
        <begin position="195"/>
        <end position="316"/>
    </location>
</feature>
<feature type="mutagenesis site" description="Decreases zinc resistance." evidence="3">
    <original>H</original>
    <variation>R</variation>
    <location>
        <position position="5"/>
    </location>
</feature>
<feature type="mutagenesis site" description="Lack of zinc resistance." evidence="3">
    <original>H</original>
    <variation>R</variation>
    <location>
        <position position="7"/>
    </location>
</feature>
<feature type="mutagenesis site" description="Decreases zinc resistance." evidence="3">
    <original>H</original>
    <variation>R</variation>
    <location>
        <position position="9"/>
    </location>
</feature>
<feature type="mutagenesis site" description="Decreases zinc resistance." evidence="3">
    <original>E</original>
    <variation>D</variation>
    <location>
        <position position="31"/>
    </location>
</feature>
<feature type="mutagenesis site" description="Lack of zinc resistance." evidence="3">
    <original>E</original>
    <variation>K</variation>
    <location>
        <position position="31"/>
    </location>
</feature>
<feature type="mutagenesis site" description="Lack of zinc resistance." evidence="3">
    <original>H</original>
    <variation>A</variation>
    <location>
        <position position="49"/>
    </location>
</feature>
<feature type="mutagenesis site" description="Hypersensitive to zinc." evidence="3">
    <original>M</original>
    <variation>L</variation>
    <location>
        <position position="50"/>
    </location>
</feature>
<feature type="mutagenesis site" description="Hypersensitive to zinc." evidence="3">
    <original>D</original>
    <variation>A</variation>
    <variation>E</variation>
    <variation>N</variation>
    <location>
        <position position="53"/>
    </location>
</feature>
<feature type="mutagenesis site" description="Lack of zinc resistance." evidence="3">
    <original>E</original>
    <variation>D</variation>
    <variation>N</variation>
    <location>
        <position position="154"/>
    </location>
</feature>
<feature type="mutagenesis site" description="Lack of zinc resistance." evidence="3">
    <original>D</original>
    <variation>A</variation>
    <variation>E</variation>
    <location>
        <position position="158"/>
    </location>
</feature>
<feature type="mutagenesis site" description="Decreases zinc resistance." evidence="3">
    <original>D</original>
    <variation>A</variation>
    <location>
        <position position="181"/>
    </location>
</feature>
<feature type="mutagenesis site" description="Hypersensitive to zinc." evidence="3">
    <original>D</original>
    <variation>E</variation>
    <variation>N</variation>
    <location>
        <position position="181"/>
    </location>
</feature>
<feature type="mutagenesis site" description="Lack of zinc resistance." evidence="3">
    <original>H</original>
    <variation>R</variation>
    <location>
        <position position="237"/>
    </location>
</feature>
<feature type="mutagenesis site" description="Decreases zinc resistance." evidence="3">
    <original>H</original>
    <variation>A</variation>
    <location>
        <position position="251"/>
    </location>
</feature>
<feature type="mutagenesis site" description="Lack of zinc resistance." evidence="3">
    <original>H</original>
    <variation>A</variation>
    <location>
        <position position="280"/>
    </location>
</feature>
<feature type="mutagenesis site" description="Hypersensitive to zinc." evidence="3">
    <original>C</original>
    <variation>S</variation>
    <location>
        <position position="290"/>
    </location>
</feature>
<feature type="mutagenesis site" description="Lack of zinc resistance." evidence="3">
    <original>H</original>
    <variation>A</variation>
    <location>
        <position position="298"/>
    </location>
</feature>
<feature type="helix" evidence="6">
    <location>
        <begin position="217"/>
        <end position="225"/>
    </location>
</feature>
<feature type="strand" evidence="6">
    <location>
        <begin position="230"/>
        <end position="240"/>
    </location>
</feature>
<feature type="strand" evidence="6">
    <location>
        <begin position="246"/>
        <end position="254"/>
    </location>
</feature>
<feature type="helix" evidence="6">
    <location>
        <begin position="260"/>
        <end position="263"/>
    </location>
</feature>
<feature type="helix" evidence="6">
    <location>
        <begin position="265"/>
        <end position="276"/>
    </location>
</feature>
<feature type="strand" evidence="6">
    <location>
        <begin position="280"/>
        <end position="286"/>
    </location>
</feature>
<organism>
    <name type="scientific">Cupriavidus metallidurans (strain ATCC 43123 / DSM 2839 / NBRC 102507 / CH34)</name>
    <name type="common">Ralstonia metallidurans</name>
    <dbReference type="NCBI Taxonomy" id="266264"/>
    <lineage>
        <taxon>Bacteria</taxon>
        <taxon>Pseudomonadati</taxon>
        <taxon>Pseudomonadota</taxon>
        <taxon>Betaproteobacteria</taxon>
        <taxon>Burkholderiales</taxon>
        <taxon>Burkholderiaceae</taxon>
        <taxon>Cupriavidus</taxon>
    </lineage>
</organism>
<reference key="1">
    <citation type="journal article" date="1989" name="Proc. Natl. Acad. Sci. U.S.A.">
        <title>Expression and nucleotide sequence of a plasmid-determined divalent cation efflux system from Alcaligenes eutrophus.</title>
        <authorList>
            <person name="Nies D.H."/>
            <person name="Nies A."/>
            <person name="Chu L."/>
            <person name="Silver S."/>
        </authorList>
    </citation>
    <scope>PRELIMINARY NUCLEOTIDE SEQUENCE [GENOMIC DNA]</scope>
</reference>
<reference key="2">
    <citation type="journal article" date="1997" name="Mol. Microbiol.">
        <title>Two-component regulatory system involved in transcriptional control of heavy-metal homoeostasis in Alcaligenes eutrophus.</title>
        <authorList>
            <person name="van der Lelie D."/>
            <person name="Schwuchow T."/>
            <person name="Schwidetzky T."/>
            <person name="Wuertz S."/>
            <person name="Baeyens W."/>
            <person name="Mergeay M."/>
            <person name="Nies D.H."/>
        </authorList>
    </citation>
    <scope>NUCLEOTIDE SEQUENCE [GENOMIC DNA]</scope>
    <scope>INDUCTION</scope>
    <scope>DISCUSSION OF FUNCTION</scope>
</reference>
<reference key="3">
    <citation type="submission" date="2004-11" db="EMBL/GenBank/DDBJ databases">
        <title>Sequence and features of the Ralstonia metallidurans CH34 heavy metals plasmids pMOL28 and pMOL30.</title>
        <authorList>
            <person name="Monchy S."/>
            <person name="van der Lelie D."/>
            <person name="Vallaeys T."/>
            <person name="Taghavi S."/>
            <person name="Benotmane M."/>
            <person name="McCorkle S."/>
            <person name="Dunn J."/>
            <person name="Lapidus A."/>
            <person name="Mergeay M."/>
        </authorList>
    </citation>
    <scope>NUCLEOTIDE SEQUENCE [LARGE SCALE GENOMIC DNA]</scope>
</reference>
<reference key="4">
    <citation type="journal article" date="2010" name="PLoS ONE">
        <title>The complete genome sequence of Cupriavidus metallidurans strain CH34, a master survivalist in harsh and anthropogenic environments.</title>
        <authorList>
            <person name="Janssen P.J."/>
            <person name="Van Houdt R."/>
            <person name="Moors H."/>
            <person name="Monsieurs P."/>
            <person name="Morin N."/>
            <person name="Michaux A."/>
            <person name="Benotmane M.A."/>
            <person name="Leys N."/>
            <person name="Vallaeys T."/>
            <person name="Lapidus A."/>
            <person name="Monchy S."/>
            <person name="Medigue C."/>
            <person name="Taghavi S."/>
            <person name="McCorkle S."/>
            <person name="Dunn J."/>
            <person name="van der Lelie D."/>
            <person name="Mergeay M."/>
        </authorList>
    </citation>
    <scope>NUCLEOTIDE SEQUENCE [LARGE SCALE GENOMIC DNA]</scope>
    <source>
        <strain>ATCC 43123 / DSM 2839 / NBRC 102507 / CH34</strain>
    </source>
</reference>
<reference key="5">
    <citation type="journal article" date="1999" name="J. Bacteriol.">
        <title>CzcD is a heavy metal ion transporter involved in regulation of heavy metal resistance in Ralstonia sp. strain CH34.</title>
        <authorList>
            <person name="Anton A."/>
            <person name="Grosse C."/>
            <person name="Reissmann J."/>
            <person name="Pribyl T."/>
            <person name="Nies D.H."/>
        </authorList>
    </citation>
    <scope>FUNCTION</scope>
    <scope>SUBCELLULAR LOCATION</scope>
    <scope>TOPOLOGY</scope>
    <scope>DISRUPTION PHENOTYPE</scope>
    <source>
        <strain>ATCC 43123 / DSM 2839 / NBRC 102507 / CH34</strain>
    </source>
</reference>
<reference key="6">
    <citation type="journal article" date="2004" name="J. Bacteriol.">
        <title>Characteristics of zinc transport by two bacterial cation diffusion facilitators from Ralstonia metallidurans CH34 and Escherichia coli.</title>
        <authorList>
            <person name="Anton A."/>
            <person name="Weltrowski A."/>
            <person name="Haney C.J."/>
            <person name="Franke S."/>
            <person name="Grass G."/>
            <person name="Rensing C."/>
            <person name="Nies D.H."/>
        </authorList>
    </citation>
    <scope>FUNCTION</scope>
    <scope>ACTIVITY REGULATION</scope>
    <scope>MUTAGENESIS OF HIS-5; HIS-7; HIS-9; GLU-31; HIS-49; MET-50; ASP-53; GLU-154; ASP-158; ASP-181; HIS-237; HIS-251; HIS-280; CYS-290 AND HIS-298</scope>
    <source>
        <strain>ATCC 43123 / DSM 2839 / NBRC 102507 / CH34</strain>
    </source>
</reference>
<gene>
    <name type="primary">czcD</name>
    <name type="ordered locus">Rmet_5979</name>
</gene>
<geneLocation type="plasmid">
    <name>pMOL30</name>
</geneLocation>
<sequence length="316" mass="33707">MGAGHSHDHPGGNERSLKIALALTGTFLIAEVVGGVMTKSLALISDAAHMLTDTVALAIALAAIAIAKRPADKKRTFGYYRFEILAAAFNALLLFGVAIYILYEAYLRLKSPPQIESTGMFVVAVLGLIINLISMRMLSSGQSSSLNVKGAYLEVWSDLLGSVGVIAGAIIIRFTGWAWVDSAIAVLIGLWVLPRTWILLKSSLNVLLEGVPDDVDLAEVEKQILATPGVKSFHDLHIWALTSGKASLTVHVVNDTAVNPEMEVLPELKQMLADKFDITHVTIQFELAPCEQADAAQHFNASPALVGSKSLAAGGN</sequence>
<comment type="function">
    <text evidence="2 3">Mediates a low-level metal ion resistance, probably by efflux of cations from the cytoplasm into the periplasm. Also mediates resistance to cobalt, cadmium and zinc via regulation of the Czc system. May repress expression of the Czc system by an export of the inducing cations. Binds and transports zinc. Can also bind cobalt, copper and nickel.</text>
</comment>
<comment type="activity regulation">
    <text evidence="3">Efflux is inhibited by FCCP.</text>
</comment>
<comment type="subcellular location">
    <subcellularLocation>
        <location evidence="2">Cell inner membrane</location>
        <topology evidence="2">Multi-pass membrane protein</topology>
    </subcellularLocation>
</comment>
<comment type="induction">
    <text evidence="4">Most highly expressed when the upstream czcCBA transcript is not induced.</text>
</comment>
<comment type="disruption phenotype">
    <text evidence="2">Mutant is impaired in metal sensing. Deletion leads to partially constitutive expression of the Czc system due to an increased transcription of the czcCBA genes.</text>
</comment>
<comment type="similarity">
    <text evidence="5">Belongs to the cation diffusion facilitator (CDF) transporter (TC 2.A.4) family. SLC30A subfamily.</text>
</comment>
<dbReference type="EMBL" id="X98451">
    <property type="protein sequence ID" value="CAA67085.1"/>
    <property type="molecule type" value="Genomic_DNA"/>
</dbReference>
<dbReference type="EMBL" id="X71400">
    <property type="protein sequence ID" value="CAI11245.1"/>
    <property type="molecule type" value="Genomic_DNA"/>
</dbReference>
<dbReference type="EMBL" id="CP000354">
    <property type="protein sequence ID" value="ABF12838.1"/>
    <property type="molecule type" value="Genomic_DNA"/>
</dbReference>
<dbReference type="RefSeq" id="WP_004635344.1">
    <property type="nucleotide sequence ID" value="NC_007971.2"/>
</dbReference>
<dbReference type="RefSeq" id="YP_145596.1">
    <property type="nucleotide sequence ID" value="NC_006466.1"/>
</dbReference>
<dbReference type="PDB" id="6VD9">
    <property type="method" value="X-ray"/>
    <property type="resolution" value="1.75 A"/>
    <property type="chains" value="A/B/C/D=213-287"/>
</dbReference>
<dbReference type="PDBsum" id="6VD9"/>
<dbReference type="SMR" id="P13512"/>
<dbReference type="TCDB" id="2.A.4.1.1">
    <property type="family name" value="the cation diffusion facilitator (cdf) family"/>
</dbReference>
<dbReference type="KEGG" id="rme:Rmet_5979"/>
<dbReference type="HOGENOM" id="CLU_013430_0_0_4"/>
<dbReference type="PRO" id="PR:P13512"/>
<dbReference type="Proteomes" id="UP000002429">
    <property type="component" value="Plasmid pMOL30"/>
</dbReference>
<dbReference type="GO" id="GO:0005886">
    <property type="term" value="C:plasma membrane"/>
    <property type="evidence" value="ECO:0007669"/>
    <property type="project" value="UniProtKB-SubCell"/>
</dbReference>
<dbReference type="GO" id="GO:0005385">
    <property type="term" value="F:zinc ion transmembrane transporter activity"/>
    <property type="evidence" value="ECO:0007669"/>
    <property type="project" value="TreeGrafter"/>
</dbReference>
<dbReference type="GO" id="GO:0010312">
    <property type="term" value="P:detoxification of zinc ion"/>
    <property type="evidence" value="ECO:0000315"/>
    <property type="project" value="CACAO"/>
</dbReference>
<dbReference type="GO" id="GO:0046686">
    <property type="term" value="P:response to cadmium ion"/>
    <property type="evidence" value="ECO:0007669"/>
    <property type="project" value="UniProtKB-KW"/>
</dbReference>
<dbReference type="Gene3D" id="1.20.1510.10">
    <property type="entry name" value="Cation efflux protein transmembrane domain"/>
    <property type="match status" value="1"/>
</dbReference>
<dbReference type="InterPro" id="IPR002524">
    <property type="entry name" value="Cation_efflux"/>
</dbReference>
<dbReference type="InterPro" id="IPR036837">
    <property type="entry name" value="Cation_efflux_CTD_sf"/>
</dbReference>
<dbReference type="InterPro" id="IPR027469">
    <property type="entry name" value="Cation_efflux_TMD_sf"/>
</dbReference>
<dbReference type="InterPro" id="IPR050681">
    <property type="entry name" value="CDF/SLC30A"/>
</dbReference>
<dbReference type="NCBIfam" id="TIGR01297">
    <property type="entry name" value="CDF"/>
    <property type="match status" value="1"/>
</dbReference>
<dbReference type="PANTHER" id="PTHR11562">
    <property type="entry name" value="CATION EFFLUX PROTEIN/ ZINC TRANSPORTER"/>
    <property type="match status" value="1"/>
</dbReference>
<dbReference type="PANTHER" id="PTHR11562:SF17">
    <property type="entry name" value="RE54080P-RELATED"/>
    <property type="match status" value="1"/>
</dbReference>
<dbReference type="Pfam" id="PF01545">
    <property type="entry name" value="Cation_efflux"/>
    <property type="match status" value="1"/>
</dbReference>
<dbReference type="SUPFAM" id="SSF160240">
    <property type="entry name" value="Cation efflux protein cytoplasmic domain-like"/>
    <property type="match status" value="1"/>
</dbReference>
<dbReference type="SUPFAM" id="SSF161111">
    <property type="entry name" value="Cation efflux protein transmembrane domain-like"/>
    <property type="match status" value="1"/>
</dbReference>